<proteinExistence type="inferred from homology"/>
<dbReference type="EC" id="1.4.4.2" evidence="1"/>
<dbReference type="EMBL" id="CP000783">
    <property type="protein sequence ID" value="ABU75723.1"/>
    <property type="molecule type" value="Genomic_DNA"/>
</dbReference>
<dbReference type="RefSeq" id="WP_012123849.1">
    <property type="nucleotide sequence ID" value="NC_009778.1"/>
</dbReference>
<dbReference type="SMR" id="A7MR85"/>
<dbReference type="KEGG" id="esa:ESA_00426"/>
<dbReference type="PATRIC" id="fig|290339.8.peg.389"/>
<dbReference type="HOGENOM" id="CLU_004620_3_2_6"/>
<dbReference type="Proteomes" id="UP000000260">
    <property type="component" value="Chromosome"/>
</dbReference>
<dbReference type="GO" id="GO:0005829">
    <property type="term" value="C:cytosol"/>
    <property type="evidence" value="ECO:0007669"/>
    <property type="project" value="TreeGrafter"/>
</dbReference>
<dbReference type="GO" id="GO:0005960">
    <property type="term" value="C:glycine cleavage complex"/>
    <property type="evidence" value="ECO:0007669"/>
    <property type="project" value="TreeGrafter"/>
</dbReference>
<dbReference type="GO" id="GO:0016594">
    <property type="term" value="F:glycine binding"/>
    <property type="evidence" value="ECO:0007669"/>
    <property type="project" value="TreeGrafter"/>
</dbReference>
<dbReference type="GO" id="GO:0004375">
    <property type="term" value="F:glycine dehydrogenase (decarboxylating) activity"/>
    <property type="evidence" value="ECO:0007669"/>
    <property type="project" value="UniProtKB-EC"/>
</dbReference>
<dbReference type="GO" id="GO:0030170">
    <property type="term" value="F:pyridoxal phosphate binding"/>
    <property type="evidence" value="ECO:0007669"/>
    <property type="project" value="TreeGrafter"/>
</dbReference>
<dbReference type="GO" id="GO:0019464">
    <property type="term" value="P:glycine decarboxylation via glycine cleavage system"/>
    <property type="evidence" value="ECO:0007669"/>
    <property type="project" value="UniProtKB-UniRule"/>
</dbReference>
<dbReference type="CDD" id="cd00613">
    <property type="entry name" value="GDC-P"/>
    <property type="match status" value="2"/>
</dbReference>
<dbReference type="FunFam" id="3.40.640.10:FF:000005">
    <property type="entry name" value="Glycine dehydrogenase (decarboxylating), mitochondrial"/>
    <property type="match status" value="1"/>
</dbReference>
<dbReference type="FunFam" id="3.90.1150.10:FF:000007">
    <property type="entry name" value="Glycine dehydrogenase (decarboxylating), mitochondrial"/>
    <property type="match status" value="1"/>
</dbReference>
<dbReference type="FunFam" id="3.40.640.10:FF:000007">
    <property type="entry name" value="glycine dehydrogenase (Decarboxylating), mitochondrial"/>
    <property type="match status" value="1"/>
</dbReference>
<dbReference type="Gene3D" id="3.90.1150.10">
    <property type="entry name" value="Aspartate Aminotransferase, domain 1"/>
    <property type="match status" value="2"/>
</dbReference>
<dbReference type="Gene3D" id="3.40.640.10">
    <property type="entry name" value="Type I PLP-dependent aspartate aminotransferase-like (Major domain)"/>
    <property type="match status" value="2"/>
</dbReference>
<dbReference type="HAMAP" id="MF_00711">
    <property type="entry name" value="GcvP"/>
    <property type="match status" value="1"/>
</dbReference>
<dbReference type="InterPro" id="IPR003437">
    <property type="entry name" value="GcvP"/>
</dbReference>
<dbReference type="InterPro" id="IPR049316">
    <property type="entry name" value="GDC-P_C"/>
</dbReference>
<dbReference type="InterPro" id="IPR049315">
    <property type="entry name" value="GDC-P_N"/>
</dbReference>
<dbReference type="InterPro" id="IPR020581">
    <property type="entry name" value="GDC_P"/>
</dbReference>
<dbReference type="InterPro" id="IPR015424">
    <property type="entry name" value="PyrdxlP-dep_Trfase"/>
</dbReference>
<dbReference type="InterPro" id="IPR015421">
    <property type="entry name" value="PyrdxlP-dep_Trfase_major"/>
</dbReference>
<dbReference type="InterPro" id="IPR015422">
    <property type="entry name" value="PyrdxlP-dep_Trfase_small"/>
</dbReference>
<dbReference type="NCBIfam" id="TIGR00461">
    <property type="entry name" value="gcvP"/>
    <property type="match status" value="1"/>
</dbReference>
<dbReference type="NCBIfam" id="NF003346">
    <property type="entry name" value="PRK04366.1"/>
    <property type="match status" value="1"/>
</dbReference>
<dbReference type="PANTHER" id="PTHR11773:SF13">
    <property type="entry name" value="GLYCINE DEHYDROGENASE (DECARBOXYLATING)"/>
    <property type="match status" value="1"/>
</dbReference>
<dbReference type="PANTHER" id="PTHR11773">
    <property type="entry name" value="GLYCINE DEHYDROGENASE, DECARBOXYLATING"/>
    <property type="match status" value="1"/>
</dbReference>
<dbReference type="Pfam" id="PF21478">
    <property type="entry name" value="GcvP2_C"/>
    <property type="match status" value="1"/>
</dbReference>
<dbReference type="Pfam" id="PF02347">
    <property type="entry name" value="GDC-P"/>
    <property type="match status" value="2"/>
</dbReference>
<dbReference type="SUPFAM" id="SSF53383">
    <property type="entry name" value="PLP-dependent transferases"/>
    <property type="match status" value="2"/>
</dbReference>
<organism>
    <name type="scientific">Cronobacter sakazakii (strain ATCC BAA-894)</name>
    <name type="common">Enterobacter sakazakii</name>
    <dbReference type="NCBI Taxonomy" id="290339"/>
    <lineage>
        <taxon>Bacteria</taxon>
        <taxon>Pseudomonadati</taxon>
        <taxon>Pseudomonadota</taxon>
        <taxon>Gammaproteobacteria</taxon>
        <taxon>Enterobacterales</taxon>
        <taxon>Enterobacteriaceae</taxon>
        <taxon>Cronobacter</taxon>
    </lineage>
</organism>
<comment type="function">
    <text evidence="1">The glycine cleavage system catalyzes the degradation of glycine. The P protein binds the alpha-amino group of glycine through its pyridoxal phosphate cofactor; CO(2) is released and the remaining methylamine moiety is then transferred to the lipoamide cofactor of the H protein.</text>
</comment>
<comment type="catalytic activity">
    <reaction evidence="1">
        <text>N(6)-[(R)-lipoyl]-L-lysyl-[glycine-cleavage complex H protein] + glycine + H(+) = N(6)-[(R)-S(8)-aminomethyldihydrolipoyl]-L-lysyl-[glycine-cleavage complex H protein] + CO2</text>
        <dbReference type="Rhea" id="RHEA:24304"/>
        <dbReference type="Rhea" id="RHEA-COMP:10494"/>
        <dbReference type="Rhea" id="RHEA-COMP:10495"/>
        <dbReference type="ChEBI" id="CHEBI:15378"/>
        <dbReference type="ChEBI" id="CHEBI:16526"/>
        <dbReference type="ChEBI" id="CHEBI:57305"/>
        <dbReference type="ChEBI" id="CHEBI:83099"/>
        <dbReference type="ChEBI" id="CHEBI:83143"/>
        <dbReference type="EC" id="1.4.4.2"/>
    </reaction>
</comment>
<comment type="cofactor">
    <cofactor evidence="1">
        <name>pyridoxal 5'-phosphate</name>
        <dbReference type="ChEBI" id="CHEBI:597326"/>
    </cofactor>
</comment>
<comment type="subunit">
    <text evidence="1">The glycine cleavage system is composed of four proteins: P, T, L and H.</text>
</comment>
<comment type="similarity">
    <text evidence="1">Belongs to the GcvP family.</text>
</comment>
<keyword id="KW-0560">Oxidoreductase</keyword>
<keyword id="KW-0663">Pyridoxal phosphate</keyword>
<keyword id="KW-1185">Reference proteome</keyword>
<accession>A7MR85</accession>
<name>GCSP_CROS8</name>
<feature type="chain" id="PRO_1000045583" description="Glycine dehydrogenase (decarboxylating)">
    <location>
        <begin position="1"/>
        <end position="957"/>
    </location>
</feature>
<feature type="modified residue" description="N6-(pyridoxal phosphate)lysine" evidence="1">
    <location>
        <position position="708"/>
    </location>
</feature>
<reference key="1">
    <citation type="journal article" date="2010" name="PLoS ONE">
        <title>Genome sequence of Cronobacter sakazakii BAA-894 and comparative genomic hybridization analysis with other Cronobacter species.</title>
        <authorList>
            <person name="Kucerova E."/>
            <person name="Clifton S.W."/>
            <person name="Xia X.Q."/>
            <person name="Long F."/>
            <person name="Porwollik S."/>
            <person name="Fulton L."/>
            <person name="Fronick C."/>
            <person name="Minx P."/>
            <person name="Kyung K."/>
            <person name="Warren W."/>
            <person name="Fulton R."/>
            <person name="Feng D."/>
            <person name="Wollam A."/>
            <person name="Shah N."/>
            <person name="Bhonagiri V."/>
            <person name="Nash W.E."/>
            <person name="Hallsworth-Pepin K."/>
            <person name="Wilson R.K."/>
            <person name="McClelland M."/>
            <person name="Forsythe S.J."/>
        </authorList>
    </citation>
    <scope>NUCLEOTIDE SEQUENCE [LARGE SCALE GENOMIC DNA]</scope>
    <source>
        <strain>ATCC BAA-894</strain>
    </source>
</reference>
<evidence type="ECO:0000255" key="1">
    <source>
        <dbReference type="HAMAP-Rule" id="MF_00711"/>
    </source>
</evidence>
<protein>
    <recommendedName>
        <fullName evidence="1">Glycine dehydrogenase (decarboxylating)</fullName>
        <ecNumber evidence="1">1.4.4.2</ecNumber>
    </recommendedName>
    <alternativeName>
        <fullName evidence="1">Glycine cleavage system P-protein</fullName>
    </alternativeName>
    <alternativeName>
        <fullName evidence="1">Glycine decarboxylase</fullName>
    </alternativeName>
    <alternativeName>
        <fullName evidence="1">Glycine dehydrogenase (aminomethyl-transferring)</fullName>
    </alternativeName>
</protein>
<sequence length="957" mass="104444">MTQTLSHLENRDAFIERHIGPGVDQQQEMLRTVGADSLDALISQIVPADIQLATPPDVGDAATEFAALAELKAIAGRNKRFKNYIGMGYTAVHTPPVILRNMLENPGWYTAYTPYQPEVSQGRLEALLNFQQVTLDLTGLDIASASLLDEATAAAEAMAMAKRVSKLKNANRFFVAADVHPQTLDVVRTRAETFGFEVIVDDAPKALDHQDLFGVLLQQVGTTGEVHDYRELISELKSRKVIVSVAADFMALVLLTAPGKQGADIVFGSAQRFGVPMGYGGPHAAFFAASDEFKRSMPGRIIGVSKDAAGRTALRMAMQTREQHIRREKANSNICTSQVLLANIASLYAVFHGPAGLKRIASRIHRFADILAAGLQHKGLKLRHATWFDTLCVEVADKATVLARAEASEINLRSDIPGAVGITLDETTTRADVQALLRVVTGEDATFDIDALDKEVAHDSRSIPAAMLRDDAILTHPVFNRYHSETEMMRYMHSLERKDLALNQAMIPLGSCTMKLNAAAEMIPITWPEFAELHPFCPADQAEGYLQMISQLSDWLVKLTGYDALCMQPNSGAQGEYAGLLAIRHYHESRNEGHRDICLIPSSAHGTNPASAQMAGMQVVVVACDKQGNIDLADLRAKAETAGDKLSCIMVTYPSTHGVYEETIREVCDIVHQYGGQVYLDGANMNAQVGITSPGYIGADVSHLNLHKTFCIPHGGGGPGMGPIGVKAHLAPFVPGHSVVQIEGMLTSQGAVSAAPFGSASILPISWMYIRMMGSQGLKKASQTAILNANYIASRLKDAYPVLYTGRDGRVAHECILDIRPLKEATGISELDIAKRLIDYGFHAPTMSFPVAGTLMVEPTESESKVELDRFIDAMLAIRGEIDRVAQGEWPQDDNPLVNAPHVQRELAQEWEHAYSRELAAFPAGFENKYWPTVKRLDDVYGDRNLFCSCVPMSEYQ</sequence>
<gene>
    <name evidence="1" type="primary">gcvP</name>
    <name type="ordered locus">ESA_00426</name>
</gene>